<feature type="chain" id="PRO_0000324139" description="Golgi phosphoprotein 3-like A">
    <location>
        <begin position="1"/>
        <end position="280"/>
    </location>
</feature>
<feature type="region of interest" description="Disordered" evidence="2">
    <location>
        <begin position="1"/>
        <end position="32"/>
    </location>
</feature>
<feature type="region of interest" description="Beta-hairpin required for oligomerization" evidence="1">
    <location>
        <begin position="171"/>
        <end position="182"/>
    </location>
</feature>
<feature type="compositionally biased region" description="Basic and acidic residues" evidence="2">
    <location>
        <begin position="10"/>
        <end position="32"/>
    </location>
</feature>
<feature type="binding site" evidence="1">
    <location>
        <position position="62"/>
    </location>
    <ligand>
        <name>a 1,2-diacyl-sn-glycero-3-phospho-(1D-myo-inositol 4-phosphate)</name>
        <dbReference type="ChEBI" id="CHEBI:58178"/>
    </ligand>
</feature>
<feature type="binding site" evidence="1">
    <location>
        <position position="71"/>
    </location>
    <ligand>
        <name>a 1,2-diacyl-sn-glycero-3-phospho-(1D-myo-inositol 4-phosphate)</name>
        <dbReference type="ChEBI" id="CHEBI:58178"/>
    </ligand>
</feature>
<feature type="binding site" evidence="1">
    <location>
        <position position="152"/>
    </location>
    <ligand>
        <name>a 1,2-diacyl-sn-glycero-3-phospho-(1D-myo-inositol 4-phosphate)</name>
        <dbReference type="ChEBI" id="CHEBI:58178"/>
    </ligand>
</feature>
<feature type="binding site" evidence="1">
    <location>
        <position position="155"/>
    </location>
    <ligand>
        <name>a 1,2-diacyl-sn-glycero-3-phospho-(1D-myo-inositol 4-phosphate)</name>
        <dbReference type="ChEBI" id="CHEBI:58178"/>
    </ligand>
</feature>
<reference key="1">
    <citation type="submission" date="2004-12" db="EMBL/GenBank/DDBJ databases">
        <authorList>
            <consortium name="NIH - Xenopus Gene Collection (XGC) project"/>
        </authorList>
    </citation>
    <scope>NUCLEOTIDE SEQUENCE [LARGE SCALE MRNA]</scope>
    <source>
        <tissue>Testis</tissue>
    </source>
</reference>
<protein>
    <recommendedName>
        <fullName>Golgi phosphoprotein 3-like A</fullName>
    </recommendedName>
</protein>
<organism>
    <name type="scientific">Xenopus laevis</name>
    <name type="common">African clawed frog</name>
    <dbReference type="NCBI Taxonomy" id="8355"/>
    <lineage>
        <taxon>Eukaryota</taxon>
        <taxon>Metazoa</taxon>
        <taxon>Chordata</taxon>
        <taxon>Craniata</taxon>
        <taxon>Vertebrata</taxon>
        <taxon>Euteleostomi</taxon>
        <taxon>Amphibia</taxon>
        <taxon>Batrachia</taxon>
        <taxon>Anura</taxon>
        <taxon>Pipoidea</taxon>
        <taxon>Pipidae</taxon>
        <taxon>Xenopodinae</taxon>
        <taxon>Xenopus</taxon>
        <taxon>Xenopus</taxon>
    </lineage>
</organism>
<proteinExistence type="evidence at transcript level"/>
<gene>
    <name type="primary">golph3l-a</name>
</gene>
<comment type="function">
    <text evidence="1">Phosphatidylinositol-4-phosphate-binding protein that may play a role in the process of vesicle budding at the Golgi and anterograde transport to the plasma membrane.</text>
</comment>
<comment type="subunit">
    <text evidence="1">Homooligomer.</text>
</comment>
<comment type="subcellular location">
    <subcellularLocation>
        <location evidence="1">Golgi apparatus</location>
        <location evidence="1">Golgi stack membrane</location>
        <topology evidence="1">Peripheral membrane protein</topology>
        <orientation evidence="1">Cytoplasmic side</orientation>
    </subcellularLocation>
    <subcellularLocation>
        <location evidence="1">Golgi apparatus</location>
        <location evidence="1">trans-Golgi network membrane</location>
        <topology evidence="1">Peripheral membrane protein</topology>
        <orientation evidence="1">Cytoplasmic side</orientation>
    </subcellularLocation>
    <text evidence="1">Phosphatidylinositol 4-phosphate (PtdIns4P)-binding mediates recruitment to Golgi membranes.</text>
</comment>
<comment type="similarity">
    <text evidence="3">Belongs to the GOLPH3/VPS74 family.</text>
</comment>
<name>GP3LA_XENLA</name>
<dbReference type="EMBL" id="BC087493">
    <property type="protein sequence ID" value="AAH87493.1"/>
    <property type="molecule type" value="mRNA"/>
</dbReference>
<dbReference type="RefSeq" id="NP_001088809.1">
    <property type="nucleotide sequence ID" value="NM_001095340.1"/>
</dbReference>
<dbReference type="RefSeq" id="XP_018087582.1">
    <property type="nucleotide sequence ID" value="XM_018232093.1"/>
</dbReference>
<dbReference type="SMR" id="Q5PPU5"/>
<dbReference type="DNASU" id="496077"/>
<dbReference type="GeneID" id="496077"/>
<dbReference type="KEGG" id="xla:496077"/>
<dbReference type="AGR" id="Xenbase:XB-GENE-6252815"/>
<dbReference type="CTD" id="496077"/>
<dbReference type="Xenbase" id="XB-GENE-6252815">
    <property type="gene designation" value="golph3l.S"/>
</dbReference>
<dbReference type="OMA" id="KEXGYTS"/>
<dbReference type="OrthoDB" id="2189106at2759"/>
<dbReference type="Proteomes" id="UP000186698">
    <property type="component" value="Chromosome 8S"/>
</dbReference>
<dbReference type="Bgee" id="496077">
    <property type="expression patterns" value="Expressed in internal ear and 19 other cell types or tissues"/>
</dbReference>
<dbReference type="GO" id="GO:0005829">
    <property type="term" value="C:cytosol"/>
    <property type="evidence" value="ECO:0000318"/>
    <property type="project" value="GO_Central"/>
</dbReference>
<dbReference type="GO" id="GO:0031985">
    <property type="term" value="C:Golgi cisterna"/>
    <property type="evidence" value="ECO:0000250"/>
    <property type="project" value="UniProtKB"/>
</dbReference>
<dbReference type="GO" id="GO:0032580">
    <property type="term" value="C:Golgi cisterna membrane"/>
    <property type="evidence" value="ECO:0007669"/>
    <property type="project" value="UniProtKB-SubCell"/>
</dbReference>
<dbReference type="GO" id="GO:0000139">
    <property type="term" value="C:Golgi membrane"/>
    <property type="evidence" value="ECO:0007669"/>
    <property type="project" value="GOC"/>
</dbReference>
<dbReference type="GO" id="GO:0005802">
    <property type="term" value="C:trans-Golgi network"/>
    <property type="evidence" value="ECO:0000250"/>
    <property type="project" value="UniProtKB"/>
</dbReference>
<dbReference type="GO" id="GO:0070273">
    <property type="term" value="F:phosphatidylinositol-4-phosphate binding"/>
    <property type="evidence" value="ECO:0000250"/>
    <property type="project" value="UniProtKB"/>
</dbReference>
<dbReference type="GO" id="GO:0007030">
    <property type="term" value="P:Golgi organization"/>
    <property type="evidence" value="ECO:0000250"/>
    <property type="project" value="UniProtKB"/>
</dbReference>
<dbReference type="GO" id="GO:0043001">
    <property type="term" value="P:Golgi to plasma membrane protein transport"/>
    <property type="evidence" value="ECO:0000318"/>
    <property type="project" value="GO_Central"/>
</dbReference>
<dbReference type="GO" id="GO:0048194">
    <property type="term" value="P:Golgi vesicle budding"/>
    <property type="evidence" value="ECO:0000318"/>
    <property type="project" value="GO_Central"/>
</dbReference>
<dbReference type="GO" id="GO:0050714">
    <property type="term" value="P:positive regulation of protein secretion"/>
    <property type="evidence" value="ECO:0000250"/>
    <property type="project" value="UniProtKB"/>
</dbReference>
<dbReference type="GO" id="GO:0006890">
    <property type="term" value="P:retrograde vesicle-mediated transport, Golgi to endoplasmic reticulum"/>
    <property type="evidence" value="ECO:0000318"/>
    <property type="project" value="GO_Central"/>
</dbReference>
<dbReference type="FunFam" id="1.10.3630.10:FF:000001">
    <property type="entry name" value="Golgi phosphoprotein 3"/>
    <property type="match status" value="1"/>
</dbReference>
<dbReference type="Gene3D" id="1.10.3630.10">
    <property type="entry name" value="yeast vps74-n-term truncation variant domain like"/>
    <property type="match status" value="1"/>
</dbReference>
<dbReference type="InterPro" id="IPR008628">
    <property type="entry name" value="GPP34-like"/>
</dbReference>
<dbReference type="InterPro" id="IPR038261">
    <property type="entry name" value="GPP34-like_sf"/>
</dbReference>
<dbReference type="PANTHER" id="PTHR12704:SF4">
    <property type="entry name" value="GOLGI PHOSPHOPROTEIN 3-LIKE"/>
    <property type="match status" value="1"/>
</dbReference>
<dbReference type="PANTHER" id="PTHR12704">
    <property type="entry name" value="TRANS-GOLGI PROTEIN GMX33"/>
    <property type="match status" value="1"/>
</dbReference>
<dbReference type="Pfam" id="PF05719">
    <property type="entry name" value="GPP34"/>
    <property type="match status" value="1"/>
</dbReference>
<evidence type="ECO:0000250" key="1"/>
<evidence type="ECO:0000256" key="2">
    <source>
        <dbReference type="SAM" id="MobiDB-lite"/>
    </source>
</evidence>
<evidence type="ECO:0000305" key="3"/>
<accession>Q5PPU5</accession>
<sequence length="280" mass="32281">MTTLIRRGRRAEEGQERRADSEDSIKDKDEEESADSKDIRLTLMEEVLLLGLKDKEGYTSFWNDCISSGLRGGILIELFLRGRVVLEPATIRKKRLIDKKVLLKSDKLTGDVLLDETIKHMKATEPAETVQSWIELLTGETWNPFKLQYQLRNVRERIAKNLVEKGILTTEKQNFLLFDMTTHPVTNTTEKQRLVKKLQESLLERWVNDPHRMDKRTLSLLVLAHSSDVLENAFSSLSDEKYDMAMNRSKELLELDPDTEGMKPNACEMIWAVLSAFNKS</sequence>
<keyword id="KW-0333">Golgi apparatus</keyword>
<keyword id="KW-0446">Lipid-binding</keyword>
<keyword id="KW-0472">Membrane</keyword>
<keyword id="KW-1185">Reference proteome</keyword>